<organism>
    <name type="scientific">Homo sapiens</name>
    <name type="common">Human</name>
    <dbReference type="NCBI Taxonomy" id="9606"/>
    <lineage>
        <taxon>Eukaryota</taxon>
        <taxon>Metazoa</taxon>
        <taxon>Chordata</taxon>
        <taxon>Craniata</taxon>
        <taxon>Vertebrata</taxon>
        <taxon>Euteleostomi</taxon>
        <taxon>Mammalia</taxon>
        <taxon>Eutheria</taxon>
        <taxon>Euarchontoglires</taxon>
        <taxon>Primates</taxon>
        <taxon>Haplorrhini</taxon>
        <taxon>Catarrhini</taxon>
        <taxon>Hominidae</taxon>
        <taxon>Homo</taxon>
    </lineage>
</organism>
<protein>
    <recommendedName>
        <fullName>Speedy protein E6</fullName>
    </recommendedName>
</protein>
<comment type="interaction">
    <interactant intactId="EBI-11960469">
        <id>P0CI01</id>
    </interactant>
    <interactant intactId="EBI-743771">
        <id>Q92624</id>
        <label>APPBP2</label>
    </interactant>
    <organismsDiffer>false</organismsDiffer>
    <experiments>3</experiments>
</comment>
<comment type="interaction">
    <interactant intactId="EBI-11960469">
        <id>P0CI01</id>
    </interactant>
    <interactant intactId="EBI-11988175">
        <id>Q9BYP8</id>
        <label>KRTAP17-1</label>
    </interactant>
    <organismsDiffer>false</organismsDiffer>
    <experiments>3</experiments>
</comment>
<comment type="interaction">
    <interactant intactId="EBI-11960469">
        <id>P0CI01</id>
    </interactant>
    <interactant intactId="EBI-1004115">
        <id>Q15691</id>
        <label>MAPRE1</label>
    </interactant>
    <organismsDiffer>false</organismsDiffer>
    <experiments>3</experiments>
</comment>
<comment type="interaction">
    <interactant intactId="EBI-11960469">
        <id>P0CI01</id>
    </interactant>
    <interactant intactId="EBI-726739">
        <id>Q9UPY8</id>
        <label>MAPRE3</label>
    </interactant>
    <organismsDiffer>false</organismsDiffer>
    <experiments>3</experiments>
</comment>
<comment type="similarity">
    <text evidence="2">Belongs to the Speedy/Ringo family.</text>
</comment>
<name>SPDE6_HUMAN</name>
<accession>P0CI01</accession>
<accession>A0A096LNU6</accession>
<evidence type="ECO:0000256" key="1">
    <source>
        <dbReference type="SAM" id="MobiDB-lite"/>
    </source>
</evidence>
<evidence type="ECO:0000305" key="2"/>
<sequence>MDRTETRFRKRGQITGKITTSRQPHPQNEQSPQRSTSGYPLQEVVDDEMLGPSAPGVDPSPPCRSLGWKRKREWSDESEEEPEKELAPEPEETWVVEMLCGLKMKLKQQRVSSILPEHHKDFNSQLAPGVDPSPPHRSFCWKRKMEWWDESEESLEEEPRKVLAPEPEEIWVAEMLCGLKMKLKRRRVSLVLPEHHEAFNRLLEDPVIKRFLAWDKDLRVSDKYLLAMVIAYFSRAGFPSWQYQRIHFFLALYLANDMEEDDEDSKQNIFHFLYRKNRSRIPLLRKRWFQLGHSMNPRARKNRSRIPLLRKRRFQLYRSTNPRARKNRSRIPLLRKHRFQLYRSMNSRARKNRSQIVLFQKRRFHFFCSMSCRAWVSPEELEEIQAYDPEHWVWARDRAHLS</sequence>
<dbReference type="EMBL" id="AC091390">
    <property type="status" value="NOT_ANNOTATED_CDS"/>
    <property type="molecule type" value="Genomic_DNA"/>
</dbReference>
<dbReference type="CCDS" id="CCDS78265.1"/>
<dbReference type="RefSeq" id="NP_001139682.2">
    <property type="nucleotide sequence ID" value="NM_001146210.4"/>
</dbReference>
<dbReference type="RefSeq" id="XP_047276750.1">
    <property type="nucleotide sequence ID" value="XM_047420794.1"/>
</dbReference>
<dbReference type="SMR" id="P0CI01"/>
<dbReference type="FunCoup" id="P0CI01">
    <property type="interactions" value="158"/>
</dbReference>
<dbReference type="IntAct" id="P0CI01">
    <property type="interactions" value="4"/>
</dbReference>
<dbReference type="STRING" id="9606.ENSP00000485230"/>
<dbReference type="iPTMnet" id="P0CI01"/>
<dbReference type="PhosphoSitePlus" id="P0CI01"/>
<dbReference type="BioMuta" id="SPDYE6"/>
<dbReference type="DMDM" id="308191577"/>
<dbReference type="MassIVE" id="P0CI01"/>
<dbReference type="PaxDb" id="9606-ENSP00000485230"/>
<dbReference type="PeptideAtlas" id="P0CI01"/>
<dbReference type="ProteomicsDB" id="52479"/>
<dbReference type="DNASU" id="729597"/>
<dbReference type="Ensembl" id="ENST00000563237.3">
    <property type="protein sequence ID" value="ENSP00000485230.1"/>
    <property type="gene ID" value="ENSG00000260097.3"/>
</dbReference>
<dbReference type="GeneID" id="729597"/>
<dbReference type="KEGG" id="hsa:729597"/>
<dbReference type="MANE-Select" id="ENST00000563237.3">
    <property type="protein sequence ID" value="ENSP00000485230.1"/>
    <property type="RefSeq nucleotide sequence ID" value="NM_001146210.4"/>
    <property type="RefSeq protein sequence ID" value="NP_001139682.2"/>
</dbReference>
<dbReference type="AGR" id="HGNC:35465"/>
<dbReference type="CTD" id="729597"/>
<dbReference type="GeneCards" id="SPDYE6"/>
<dbReference type="HGNC" id="HGNC:35465">
    <property type="gene designation" value="SPDYE6"/>
</dbReference>
<dbReference type="HPA" id="ENSG00000260097">
    <property type="expression patterns" value="Tissue enhanced (testis)"/>
</dbReference>
<dbReference type="neXtProt" id="NX_P0CI01"/>
<dbReference type="VEuPathDB" id="HostDB:ENSG00000260097"/>
<dbReference type="eggNOG" id="ENOG502SSQN">
    <property type="taxonomic scope" value="Eukaryota"/>
</dbReference>
<dbReference type="GeneTree" id="ENSGT00940000154173"/>
<dbReference type="InParanoid" id="P0CI01"/>
<dbReference type="OMA" id="PEHHETF"/>
<dbReference type="OrthoDB" id="83849at9443"/>
<dbReference type="PAN-GO" id="P0CI01">
    <property type="GO annotations" value="1 GO annotation based on evolutionary models"/>
</dbReference>
<dbReference type="PhylomeDB" id="P0CI01"/>
<dbReference type="PathwayCommons" id="P0CI01"/>
<dbReference type="SignaLink" id="P0CI01"/>
<dbReference type="BioGRID-ORCS" id="729597">
    <property type="hits" value="37 hits in 226 CRISPR screens"/>
</dbReference>
<dbReference type="ChiTaRS" id="SPDYE6">
    <property type="organism name" value="human"/>
</dbReference>
<dbReference type="GenomeRNAi" id="729597"/>
<dbReference type="Pharos" id="P0CI01">
    <property type="development level" value="Tdark"/>
</dbReference>
<dbReference type="PRO" id="PR:P0CI01"/>
<dbReference type="Proteomes" id="UP000005640">
    <property type="component" value="Chromosome 7"/>
</dbReference>
<dbReference type="RNAct" id="P0CI01">
    <property type="molecule type" value="protein"/>
</dbReference>
<dbReference type="Bgee" id="ENSG00000260097">
    <property type="expression patterns" value="Expressed in bone marrow cell and 100 other cell types or tissues"/>
</dbReference>
<dbReference type="GO" id="GO:0019901">
    <property type="term" value="F:protein kinase binding"/>
    <property type="evidence" value="ECO:0000318"/>
    <property type="project" value="GO_Central"/>
</dbReference>
<dbReference type="InterPro" id="IPR020984">
    <property type="entry name" value="Speedy"/>
</dbReference>
<dbReference type="PANTHER" id="PTHR31156">
    <property type="entry name" value="WBSCR19-LIKE PROTEIN"/>
    <property type="match status" value="1"/>
</dbReference>
<dbReference type="Pfam" id="PF11357">
    <property type="entry name" value="Spy1"/>
    <property type="match status" value="2"/>
</dbReference>
<reference key="1">
    <citation type="journal article" date="2003" name="Nature">
        <title>The DNA sequence of human chromosome 7.</title>
        <authorList>
            <person name="Hillier L.W."/>
            <person name="Fulton R.S."/>
            <person name="Fulton L.A."/>
            <person name="Graves T.A."/>
            <person name="Pepin K.H."/>
            <person name="Wagner-McPherson C."/>
            <person name="Layman D."/>
            <person name="Maas J."/>
            <person name="Jaeger S."/>
            <person name="Walker R."/>
            <person name="Wylie K."/>
            <person name="Sekhon M."/>
            <person name="Becker M.C."/>
            <person name="O'Laughlin M.D."/>
            <person name="Schaller M.E."/>
            <person name="Fewell G.A."/>
            <person name="Delehaunty K.D."/>
            <person name="Miner T.L."/>
            <person name="Nash W.E."/>
            <person name="Cordes M."/>
            <person name="Du H."/>
            <person name="Sun H."/>
            <person name="Edwards J."/>
            <person name="Bradshaw-Cordum H."/>
            <person name="Ali J."/>
            <person name="Andrews S."/>
            <person name="Isak A."/>
            <person name="Vanbrunt A."/>
            <person name="Nguyen C."/>
            <person name="Du F."/>
            <person name="Lamar B."/>
            <person name="Courtney L."/>
            <person name="Kalicki J."/>
            <person name="Ozersky P."/>
            <person name="Bielicki L."/>
            <person name="Scott K."/>
            <person name="Holmes A."/>
            <person name="Harkins R."/>
            <person name="Harris A."/>
            <person name="Strong C.M."/>
            <person name="Hou S."/>
            <person name="Tomlinson C."/>
            <person name="Dauphin-Kohlberg S."/>
            <person name="Kozlowicz-Reilly A."/>
            <person name="Leonard S."/>
            <person name="Rohlfing T."/>
            <person name="Rock S.M."/>
            <person name="Tin-Wollam A.-M."/>
            <person name="Abbott A."/>
            <person name="Minx P."/>
            <person name="Maupin R."/>
            <person name="Strowmatt C."/>
            <person name="Latreille P."/>
            <person name="Miller N."/>
            <person name="Johnson D."/>
            <person name="Murray J."/>
            <person name="Woessner J.P."/>
            <person name="Wendl M.C."/>
            <person name="Yang S.-P."/>
            <person name="Schultz B.R."/>
            <person name="Wallis J.W."/>
            <person name="Spieth J."/>
            <person name="Bieri T.A."/>
            <person name="Nelson J.O."/>
            <person name="Berkowicz N."/>
            <person name="Wohldmann P.E."/>
            <person name="Cook L.L."/>
            <person name="Hickenbotham M.T."/>
            <person name="Eldred J."/>
            <person name="Williams D."/>
            <person name="Bedell J.A."/>
            <person name="Mardis E.R."/>
            <person name="Clifton S.W."/>
            <person name="Chissoe S.L."/>
            <person name="Marra M.A."/>
            <person name="Raymond C."/>
            <person name="Haugen E."/>
            <person name="Gillett W."/>
            <person name="Zhou Y."/>
            <person name="James R."/>
            <person name="Phelps K."/>
            <person name="Iadanoto S."/>
            <person name="Bubb K."/>
            <person name="Simms E."/>
            <person name="Levy R."/>
            <person name="Clendenning J."/>
            <person name="Kaul R."/>
            <person name="Kent W.J."/>
            <person name="Furey T.S."/>
            <person name="Baertsch R.A."/>
            <person name="Brent M.R."/>
            <person name="Keibler E."/>
            <person name="Flicek P."/>
            <person name="Bork P."/>
            <person name="Suyama M."/>
            <person name="Bailey J.A."/>
            <person name="Portnoy M.E."/>
            <person name="Torrents D."/>
            <person name="Chinwalla A.T."/>
            <person name="Gish W.R."/>
            <person name="Eddy S.R."/>
            <person name="McPherson J.D."/>
            <person name="Olson M.V."/>
            <person name="Eichler E.E."/>
            <person name="Green E.D."/>
            <person name="Waterston R.H."/>
            <person name="Wilson R.K."/>
        </authorList>
    </citation>
    <scope>NUCLEOTIDE SEQUENCE [LARGE SCALE GENOMIC DNA]</scope>
</reference>
<keyword id="KW-1185">Reference proteome</keyword>
<proteinExistence type="evidence at protein level"/>
<feature type="chain" id="PRO_0000399478" description="Speedy protein E6">
    <location>
        <begin position="1"/>
        <end position="402"/>
    </location>
</feature>
<feature type="region of interest" description="Disordered" evidence="1">
    <location>
        <begin position="1"/>
        <end position="89"/>
    </location>
</feature>
<feature type="compositionally biased region" description="Polar residues" evidence="1">
    <location>
        <begin position="16"/>
        <end position="39"/>
    </location>
</feature>
<feature type="compositionally biased region" description="Acidic residues" evidence="1">
    <location>
        <begin position="76"/>
        <end position="89"/>
    </location>
</feature>
<gene>
    <name type="primary">SPDYE6</name>
</gene>